<keyword id="KW-0479">Metal-binding</keyword>
<keyword id="KW-1185">Reference proteome</keyword>
<keyword id="KW-0677">Repeat</keyword>
<keyword id="KW-0346">Stress response</keyword>
<keyword id="KW-0862">Zinc</keyword>
<keyword id="KW-0863">Zinc-finger</keyword>
<reference key="1">
    <citation type="journal article" date="2005" name="Nature">
        <title>The map-based sequence of the rice genome.</title>
        <authorList>
            <consortium name="International rice genome sequencing project (IRGSP)"/>
        </authorList>
    </citation>
    <scope>NUCLEOTIDE SEQUENCE [LARGE SCALE GENOMIC DNA]</scope>
    <source>
        <strain>cv. Nipponbare</strain>
    </source>
</reference>
<reference key="2">
    <citation type="journal article" date="2008" name="Nucleic Acids Res.">
        <title>The rice annotation project database (RAP-DB): 2008 update.</title>
        <authorList>
            <consortium name="The rice annotation project (RAP)"/>
        </authorList>
    </citation>
    <scope>GENOME REANNOTATION</scope>
    <source>
        <strain>cv. Nipponbare</strain>
    </source>
</reference>
<reference key="3">
    <citation type="journal article" date="2013" name="Rice">
        <title>Improvement of the Oryza sativa Nipponbare reference genome using next generation sequence and optical map data.</title>
        <authorList>
            <person name="Kawahara Y."/>
            <person name="de la Bastide M."/>
            <person name="Hamilton J.P."/>
            <person name="Kanamori H."/>
            <person name="McCombie W.R."/>
            <person name="Ouyang S."/>
            <person name="Schwartz D.C."/>
            <person name="Tanaka T."/>
            <person name="Wu J."/>
            <person name="Zhou S."/>
            <person name="Childs K.L."/>
            <person name="Davidson R.M."/>
            <person name="Lin H."/>
            <person name="Quesada-Ocampo L."/>
            <person name="Vaillancourt B."/>
            <person name="Sakai H."/>
            <person name="Lee S.S."/>
            <person name="Kim J."/>
            <person name="Numa H."/>
            <person name="Itoh T."/>
            <person name="Buell C.R."/>
            <person name="Matsumoto T."/>
        </authorList>
    </citation>
    <scope>GENOME REANNOTATION</scope>
    <source>
        <strain>cv. Nipponbare</strain>
    </source>
</reference>
<reference key="4">
    <citation type="journal article" date="2003" name="Science">
        <title>Collection, mapping, and annotation of over 28,000 cDNA clones from japonica rice.</title>
        <authorList>
            <consortium name="The rice full-length cDNA consortium"/>
        </authorList>
    </citation>
    <scope>NUCLEOTIDE SEQUENCE [LARGE SCALE MRNA] OF 194-290</scope>
    <source>
        <strain>cv. Nipponbare</strain>
    </source>
</reference>
<reference key="5">
    <citation type="journal article" date="2006" name="Mol. Genet. Genomics">
        <title>Genome-wide analysis of the stress associated protein (SAP) gene family containing A20/AN1 zinc-finger(s) in rice and their phylogenetic relationship with Arabidopsis.</title>
        <authorList>
            <person name="Vij S."/>
            <person name="Tyagi A.K."/>
        </authorList>
    </citation>
    <scope>GENE FAMILY</scope>
    <scope>INDUCTION</scope>
</reference>
<protein>
    <recommendedName>
        <fullName>Zinc finger AN1 and C2H2 domain-containing stress-associated protein 16</fullName>
        <shortName>OsSAP16</shortName>
    </recommendedName>
</protein>
<name>SAP16_ORYSJ</name>
<accession>Q0D5B9</accession>
<accession>Q7XIH5</accession>
<sequence>MGTPEFPNLGKHCSVGDCNQIDFLPFTCDRCDHVFCLQHRSYTSHQCPNANQKDVTVLICPLCAKGVRLNPNEDPNITWDTHVNSDCDPSNYQKVTKKKKCPVPGCRETLTFSNTIRCKDCTKEHCLKHRFGPDHKCPGPRKPESTFPFGNMLRRSQKAESCSNSNSSSTSSSWWSSSLLTAATSFKSSAEAGMQKLSTATTQAIQKAKDGISTSSSNSGDLVEQCVQCPARFSTVGALIEHCEKSHQSNSQSSRSRVTVDVCPKCSKAFRDPVLLVEHVERDHGGTSRA</sequence>
<gene>
    <name type="primary">SAP16</name>
    <name type="ordered locus">Os07g0569700</name>
    <name type="ordered locus">LOC_Os07g38240</name>
    <name type="ORF">OJ1019_E02.22</name>
</gene>
<comment type="function">
    <text evidence="1">May be involved in environmental stress response.</text>
</comment>
<comment type="induction">
    <text evidence="4">By cold, dehydration and salt stress.</text>
</comment>
<comment type="sequence caution" evidence="5">
    <conflict type="erroneous gene model prediction">
        <sequence resource="EMBL-CDS" id="BAF21954"/>
    </conflict>
</comment>
<evidence type="ECO:0000250" key="1"/>
<evidence type="ECO:0000255" key="2">
    <source>
        <dbReference type="PROSITE-ProRule" id="PRU00042"/>
    </source>
</evidence>
<evidence type="ECO:0000255" key="3">
    <source>
        <dbReference type="PROSITE-ProRule" id="PRU00449"/>
    </source>
</evidence>
<evidence type="ECO:0000269" key="4">
    <source>
    </source>
</evidence>
<evidence type="ECO:0000305" key="5"/>
<organism>
    <name type="scientific">Oryza sativa subsp. japonica</name>
    <name type="common">Rice</name>
    <dbReference type="NCBI Taxonomy" id="39947"/>
    <lineage>
        <taxon>Eukaryota</taxon>
        <taxon>Viridiplantae</taxon>
        <taxon>Streptophyta</taxon>
        <taxon>Embryophyta</taxon>
        <taxon>Tracheophyta</taxon>
        <taxon>Spermatophyta</taxon>
        <taxon>Magnoliopsida</taxon>
        <taxon>Liliopsida</taxon>
        <taxon>Poales</taxon>
        <taxon>Poaceae</taxon>
        <taxon>BOP clade</taxon>
        <taxon>Oryzoideae</taxon>
        <taxon>Oryzeae</taxon>
        <taxon>Oryzinae</taxon>
        <taxon>Oryza</taxon>
        <taxon>Oryza sativa</taxon>
    </lineage>
</organism>
<dbReference type="EMBL" id="AP003981">
    <property type="protein sequence ID" value="BAC79697.1"/>
    <property type="molecule type" value="Genomic_DNA"/>
</dbReference>
<dbReference type="EMBL" id="AP008213">
    <property type="protein sequence ID" value="BAF21954.1"/>
    <property type="status" value="ALT_SEQ"/>
    <property type="molecule type" value="Genomic_DNA"/>
</dbReference>
<dbReference type="EMBL" id="AP014963">
    <property type="status" value="NOT_ANNOTATED_CDS"/>
    <property type="molecule type" value="Genomic_DNA"/>
</dbReference>
<dbReference type="EMBL" id="AK062388">
    <property type="status" value="NOT_ANNOTATED_CDS"/>
    <property type="molecule type" value="mRNA"/>
</dbReference>
<dbReference type="RefSeq" id="XP_015644892.1">
    <property type="nucleotide sequence ID" value="XM_015789406.1"/>
</dbReference>
<dbReference type="SMR" id="Q0D5B9"/>
<dbReference type="FunCoup" id="Q0D5B9">
    <property type="interactions" value="4"/>
</dbReference>
<dbReference type="STRING" id="39947.Q0D5B9"/>
<dbReference type="PaxDb" id="39947-Q0D5B9"/>
<dbReference type="EnsemblPlants" id="Os07t0569700-01">
    <property type="protein sequence ID" value="Os07t0569700-01"/>
    <property type="gene ID" value="Os07g0569700"/>
</dbReference>
<dbReference type="Gramene" id="Os07t0569700-01">
    <property type="protein sequence ID" value="Os07t0569700-01"/>
    <property type="gene ID" value="Os07g0569700"/>
</dbReference>
<dbReference type="KEGG" id="dosa:Os07g0569700"/>
<dbReference type="eggNOG" id="KOG3183">
    <property type="taxonomic scope" value="Eukaryota"/>
</dbReference>
<dbReference type="InParanoid" id="Q0D5B9"/>
<dbReference type="OrthoDB" id="431929at2759"/>
<dbReference type="Proteomes" id="UP000000763">
    <property type="component" value="Chromosome 7"/>
</dbReference>
<dbReference type="Proteomes" id="UP000059680">
    <property type="component" value="Chromosome 7"/>
</dbReference>
<dbReference type="ExpressionAtlas" id="Q0D5B9">
    <property type="expression patterns" value="baseline and differential"/>
</dbReference>
<dbReference type="GO" id="GO:0005737">
    <property type="term" value="C:cytoplasm"/>
    <property type="evidence" value="ECO:0000318"/>
    <property type="project" value="GO_Central"/>
</dbReference>
<dbReference type="GO" id="GO:0008270">
    <property type="term" value="F:zinc ion binding"/>
    <property type="evidence" value="ECO:0007669"/>
    <property type="project" value="UniProtKB-KW"/>
</dbReference>
<dbReference type="FunFam" id="4.10.1110.10:FF:000003">
    <property type="entry name" value="AN1-type zinc finger protein 2B isoform X1"/>
    <property type="match status" value="1"/>
</dbReference>
<dbReference type="Gene3D" id="4.10.1110.10">
    <property type="entry name" value="AN1-like Zinc finger"/>
    <property type="match status" value="2"/>
</dbReference>
<dbReference type="Gene3D" id="3.30.160.60">
    <property type="entry name" value="Classic Zinc Finger"/>
    <property type="match status" value="1"/>
</dbReference>
<dbReference type="InterPro" id="IPR035896">
    <property type="entry name" value="AN1-like_Znf"/>
</dbReference>
<dbReference type="InterPro" id="IPR000058">
    <property type="entry name" value="Znf_AN1"/>
</dbReference>
<dbReference type="InterPro" id="IPR013087">
    <property type="entry name" value="Znf_C2H2_type"/>
</dbReference>
<dbReference type="PANTHER" id="PTHR14677">
    <property type="entry name" value="ARSENITE INDUCUBLE RNA ASSOCIATED PROTEIN AIP-1-RELATED"/>
    <property type="match status" value="1"/>
</dbReference>
<dbReference type="PANTHER" id="PTHR14677:SF27">
    <property type="entry name" value="ZINC FINGER AN1 AND C2H2 DOMAIN-CONTAINING STRESS-ASSOCIATED PROTEIN 11"/>
    <property type="match status" value="1"/>
</dbReference>
<dbReference type="Pfam" id="PF01428">
    <property type="entry name" value="zf-AN1"/>
    <property type="match status" value="2"/>
</dbReference>
<dbReference type="Pfam" id="PF25403">
    <property type="entry name" value="zf-C2H2_ZFAND2"/>
    <property type="match status" value="1"/>
</dbReference>
<dbReference type="SMART" id="SM00154">
    <property type="entry name" value="ZnF_AN1"/>
    <property type="match status" value="2"/>
</dbReference>
<dbReference type="SMART" id="SM00355">
    <property type="entry name" value="ZnF_C2H2"/>
    <property type="match status" value="2"/>
</dbReference>
<dbReference type="SUPFAM" id="SSF118310">
    <property type="entry name" value="AN1-like Zinc finger"/>
    <property type="match status" value="2"/>
</dbReference>
<dbReference type="PROSITE" id="PS51039">
    <property type="entry name" value="ZF_AN1"/>
    <property type="match status" value="2"/>
</dbReference>
<dbReference type="PROSITE" id="PS00028">
    <property type="entry name" value="ZINC_FINGER_C2H2_1"/>
    <property type="match status" value="2"/>
</dbReference>
<dbReference type="PROSITE" id="PS50157">
    <property type="entry name" value="ZINC_FINGER_C2H2_2"/>
    <property type="match status" value="1"/>
</dbReference>
<feature type="chain" id="PRO_0000269879" description="Zinc finger AN1 and C2H2 domain-containing stress-associated protein 16">
    <location>
        <begin position="1"/>
        <end position="290"/>
    </location>
</feature>
<feature type="zinc finger region" description="AN1-type 1" evidence="3">
    <location>
        <begin position="7"/>
        <end position="55"/>
    </location>
</feature>
<feature type="zinc finger region" description="AN1-type 2" evidence="3">
    <location>
        <begin position="95"/>
        <end position="145"/>
    </location>
</feature>
<feature type="zinc finger region" description="C2H2-type 1" evidence="2">
    <location>
        <begin position="224"/>
        <end position="247"/>
    </location>
</feature>
<feature type="zinc finger region" description="C2H2-type 2" evidence="2">
    <location>
        <begin position="261"/>
        <end position="284"/>
    </location>
</feature>
<feature type="binding site" evidence="3">
    <location>
        <position position="13"/>
    </location>
    <ligand>
        <name>Zn(2+)</name>
        <dbReference type="ChEBI" id="CHEBI:29105"/>
        <label>1</label>
    </ligand>
</feature>
<feature type="binding site" evidence="3">
    <location>
        <position position="18"/>
    </location>
    <ligand>
        <name>Zn(2+)</name>
        <dbReference type="ChEBI" id="CHEBI:29105"/>
        <label>1</label>
    </ligand>
</feature>
<feature type="binding site" evidence="3">
    <location>
        <position position="28"/>
    </location>
    <ligand>
        <name>Zn(2+)</name>
        <dbReference type="ChEBI" id="CHEBI:29105"/>
        <label>2</label>
    </ligand>
</feature>
<feature type="binding site" evidence="3">
    <location>
        <position position="31"/>
    </location>
    <ligand>
        <name>Zn(2+)</name>
        <dbReference type="ChEBI" id="CHEBI:29105"/>
        <label>2</label>
    </ligand>
</feature>
<feature type="binding site" evidence="3">
    <location>
        <position position="36"/>
    </location>
    <ligand>
        <name>Zn(2+)</name>
        <dbReference type="ChEBI" id="CHEBI:29105"/>
        <label>1</label>
    </ligand>
</feature>
<feature type="binding site" evidence="3">
    <location>
        <position position="39"/>
    </location>
    <ligand>
        <name>Zn(2+)</name>
        <dbReference type="ChEBI" id="CHEBI:29105"/>
        <label>1</label>
    </ligand>
</feature>
<feature type="binding site" evidence="3">
    <location>
        <position position="45"/>
    </location>
    <ligand>
        <name>Zn(2+)</name>
        <dbReference type="ChEBI" id="CHEBI:29105"/>
        <label>2</label>
    </ligand>
</feature>
<feature type="binding site" evidence="3">
    <location>
        <position position="47"/>
    </location>
    <ligand>
        <name>Zn(2+)</name>
        <dbReference type="ChEBI" id="CHEBI:29105"/>
        <label>2</label>
    </ligand>
</feature>
<feature type="binding site" evidence="3">
    <location>
        <position position="101"/>
    </location>
    <ligand>
        <name>Zn(2+)</name>
        <dbReference type="ChEBI" id="CHEBI:29105"/>
        <label>3</label>
    </ligand>
</feature>
<feature type="binding site" evidence="3">
    <location>
        <position position="106"/>
    </location>
    <ligand>
        <name>Zn(2+)</name>
        <dbReference type="ChEBI" id="CHEBI:29105"/>
        <label>3</label>
    </ligand>
</feature>
<feature type="binding site" evidence="3">
    <location>
        <position position="118"/>
    </location>
    <ligand>
        <name>Zn(2+)</name>
        <dbReference type="ChEBI" id="CHEBI:29105"/>
        <label>4</label>
    </ligand>
</feature>
<feature type="binding site" evidence="3">
    <location>
        <position position="121"/>
    </location>
    <ligand>
        <name>Zn(2+)</name>
        <dbReference type="ChEBI" id="CHEBI:29105"/>
        <label>4</label>
    </ligand>
</feature>
<feature type="binding site" evidence="3">
    <location>
        <position position="126"/>
    </location>
    <ligand>
        <name>Zn(2+)</name>
        <dbReference type="ChEBI" id="CHEBI:29105"/>
        <label>3</label>
    </ligand>
</feature>
<feature type="binding site" evidence="3">
    <location>
        <position position="129"/>
    </location>
    <ligand>
        <name>Zn(2+)</name>
        <dbReference type="ChEBI" id="CHEBI:29105"/>
        <label>3</label>
    </ligand>
</feature>
<feature type="binding site" evidence="3">
    <location>
        <position position="135"/>
    </location>
    <ligand>
        <name>Zn(2+)</name>
        <dbReference type="ChEBI" id="CHEBI:29105"/>
        <label>4</label>
    </ligand>
</feature>
<feature type="binding site" evidence="3">
    <location>
        <position position="137"/>
    </location>
    <ligand>
        <name>Zn(2+)</name>
        <dbReference type="ChEBI" id="CHEBI:29105"/>
        <label>4</label>
    </ligand>
</feature>
<proteinExistence type="evidence at transcript level"/>